<keyword id="KW-0963">Cytoplasm</keyword>
<keyword id="KW-0255">Endonuclease</keyword>
<keyword id="KW-0378">Hydrolase</keyword>
<keyword id="KW-0460">Magnesium</keyword>
<keyword id="KW-0479">Metal-binding</keyword>
<keyword id="KW-0507">mRNA processing</keyword>
<keyword id="KW-0540">Nuclease</keyword>
<keyword id="KW-0694">RNA-binding</keyword>
<keyword id="KW-0698">rRNA processing</keyword>
<keyword id="KW-0699">rRNA-binding</keyword>
<keyword id="KW-0819">tRNA processing</keyword>
<gene>
    <name evidence="1" type="primary">rnc</name>
    <name type="synonym">acpA</name>
    <name type="ordered locus">SPs1478</name>
</gene>
<dbReference type="EC" id="3.1.26.3" evidence="1"/>
<dbReference type="EMBL" id="BA000034">
    <property type="protein sequence ID" value="BAC64573.1"/>
    <property type="molecule type" value="Genomic_DNA"/>
</dbReference>
<dbReference type="RefSeq" id="WP_002990670.1">
    <property type="nucleotide sequence ID" value="NC_004606.1"/>
</dbReference>
<dbReference type="SMR" id="P0DF15"/>
<dbReference type="KEGG" id="sps:SPs1478"/>
<dbReference type="HOGENOM" id="CLU_000907_1_3_9"/>
<dbReference type="GO" id="GO:0005737">
    <property type="term" value="C:cytoplasm"/>
    <property type="evidence" value="ECO:0007669"/>
    <property type="project" value="UniProtKB-SubCell"/>
</dbReference>
<dbReference type="GO" id="GO:0003725">
    <property type="term" value="F:double-stranded RNA binding"/>
    <property type="evidence" value="ECO:0007669"/>
    <property type="project" value="TreeGrafter"/>
</dbReference>
<dbReference type="GO" id="GO:0046872">
    <property type="term" value="F:metal ion binding"/>
    <property type="evidence" value="ECO:0007669"/>
    <property type="project" value="UniProtKB-KW"/>
</dbReference>
<dbReference type="GO" id="GO:0004525">
    <property type="term" value="F:ribonuclease III activity"/>
    <property type="evidence" value="ECO:0007669"/>
    <property type="project" value="UniProtKB-UniRule"/>
</dbReference>
<dbReference type="GO" id="GO:0019843">
    <property type="term" value="F:rRNA binding"/>
    <property type="evidence" value="ECO:0007669"/>
    <property type="project" value="UniProtKB-KW"/>
</dbReference>
<dbReference type="GO" id="GO:0006397">
    <property type="term" value="P:mRNA processing"/>
    <property type="evidence" value="ECO:0007669"/>
    <property type="project" value="UniProtKB-UniRule"/>
</dbReference>
<dbReference type="GO" id="GO:0010468">
    <property type="term" value="P:regulation of gene expression"/>
    <property type="evidence" value="ECO:0007669"/>
    <property type="project" value="TreeGrafter"/>
</dbReference>
<dbReference type="GO" id="GO:0006364">
    <property type="term" value="P:rRNA processing"/>
    <property type="evidence" value="ECO:0007669"/>
    <property type="project" value="UniProtKB-UniRule"/>
</dbReference>
<dbReference type="GO" id="GO:0008033">
    <property type="term" value="P:tRNA processing"/>
    <property type="evidence" value="ECO:0007669"/>
    <property type="project" value="UniProtKB-KW"/>
</dbReference>
<dbReference type="CDD" id="cd10845">
    <property type="entry name" value="DSRM_RNAse_III_family"/>
    <property type="match status" value="1"/>
</dbReference>
<dbReference type="CDD" id="cd00593">
    <property type="entry name" value="RIBOc"/>
    <property type="match status" value="1"/>
</dbReference>
<dbReference type="FunFam" id="1.10.1520.10:FF:000001">
    <property type="entry name" value="Ribonuclease 3"/>
    <property type="match status" value="1"/>
</dbReference>
<dbReference type="FunFam" id="3.30.160.20:FF:000003">
    <property type="entry name" value="Ribonuclease 3"/>
    <property type="match status" value="1"/>
</dbReference>
<dbReference type="Gene3D" id="3.30.160.20">
    <property type="match status" value="1"/>
</dbReference>
<dbReference type="Gene3D" id="1.10.1520.10">
    <property type="entry name" value="Ribonuclease III domain"/>
    <property type="match status" value="1"/>
</dbReference>
<dbReference type="HAMAP" id="MF_00104">
    <property type="entry name" value="RNase_III"/>
    <property type="match status" value="1"/>
</dbReference>
<dbReference type="InterPro" id="IPR014720">
    <property type="entry name" value="dsRBD_dom"/>
</dbReference>
<dbReference type="InterPro" id="IPR011907">
    <property type="entry name" value="RNase_III"/>
</dbReference>
<dbReference type="InterPro" id="IPR000999">
    <property type="entry name" value="RNase_III_dom"/>
</dbReference>
<dbReference type="InterPro" id="IPR036389">
    <property type="entry name" value="RNase_III_sf"/>
</dbReference>
<dbReference type="NCBIfam" id="TIGR02191">
    <property type="entry name" value="RNaseIII"/>
    <property type="match status" value="1"/>
</dbReference>
<dbReference type="PANTHER" id="PTHR11207:SF0">
    <property type="entry name" value="RIBONUCLEASE 3"/>
    <property type="match status" value="1"/>
</dbReference>
<dbReference type="PANTHER" id="PTHR11207">
    <property type="entry name" value="RIBONUCLEASE III"/>
    <property type="match status" value="1"/>
</dbReference>
<dbReference type="Pfam" id="PF00035">
    <property type="entry name" value="dsrm"/>
    <property type="match status" value="1"/>
</dbReference>
<dbReference type="Pfam" id="PF14622">
    <property type="entry name" value="Ribonucleas_3_3"/>
    <property type="match status" value="1"/>
</dbReference>
<dbReference type="SMART" id="SM00358">
    <property type="entry name" value="DSRM"/>
    <property type="match status" value="1"/>
</dbReference>
<dbReference type="SMART" id="SM00535">
    <property type="entry name" value="RIBOc"/>
    <property type="match status" value="1"/>
</dbReference>
<dbReference type="SUPFAM" id="SSF54768">
    <property type="entry name" value="dsRNA-binding domain-like"/>
    <property type="match status" value="1"/>
</dbReference>
<dbReference type="SUPFAM" id="SSF69065">
    <property type="entry name" value="RNase III domain-like"/>
    <property type="match status" value="1"/>
</dbReference>
<dbReference type="PROSITE" id="PS50137">
    <property type="entry name" value="DS_RBD"/>
    <property type="match status" value="1"/>
</dbReference>
<dbReference type="PROSITE" id="PS00517">
    <property type="entry name" value="RNASE_3_1"/>
    <property type="match status" value="1"/>
</dbReference>
<dbReference type="PROSITE" id="PS50142">
    <property type="entry name" value="RNASE_3_2"/>
    <property type="match status" value="1"/>
</dbReference>
<organism>
    <name type="scientific">Streptococcus pyogenes serotype M3 (strain SSI-1)</name>
    <dbReference type="NCBI Taxonomy" id="193567"/>
    <lineage>
        <taxon>Bacteria</taxon>
        <taxon>Bacillati</taxon>
        <taxon>Bacillota</taxon>
        <taxon>Bacilli</taxon>
        <taxon>Lactobacillales</taxon>
        <taxon>Streptococcaceae</taxon>
        <taxon>Streptococcus</taxon>
    </lineage>
</organism>
<comment type="function">
    <text evidence="1">Digests double-stranded RNA. Involved in the processing of primary rRNA transcript to yield the immediate precursors to the large and small rRNAs (23S and 16S). Processes some mRNAs, and tRNAs when they are encoded in the rRNA operon. Processes pre-crRNA and tracrRNA of type II CRISPR loci if present in the organism.</text>
</comment>
<comment type="catalytic activity">
    <reaction evidence="1">
        <text>Endonucleolytic cleavage to 5'-phosphomonoester.</text>
        <dbReference type="EC" id="3.1.26.3"/>
    </reaction>
</comment>
<comment type="cofactor">
    <cofactor evidence="1">
        <name>Mg(2+)</name>
        <dbReference type="ChEBI" id="CHEBI:18420"/>
    </cofactor>
</comment>
<comment type="subunit">
    <text evidence="1">Homodimer.</text>
</comment>
<comment type="subcellular location">
    <subcellularLocation>
        <location evidence="1">Cytoplasm</location>
    </subcellularLocation>
</comment>
<comment type="similarity">
    <text evidence="1">Belongs to the ribonuclease III family.</text>
</comment>
<accession>P0DF15</accession>
<accession>P66671</accession>
<accession>Q9A105</accession>
<proteinExistence type="inferred from homology"/>
<feature type="chain" id="PRO_0000411547" description="Ribonuclease 3">
    <location>
        <begin position="1"/>
        <end position="230"/>
    </location>
</feature>
<feature type="domain" description="RNase III" evidence="1">
    <location>
        <begin position="1"/>
        <end position="134"/>
    </location>
</feature>
<feature type="domain" description="DRBM" evidence="1">
    <location>
        <begin position="160"/>
        <end position="229"/>
    </location>
</feature>
<feature type="active site" evidence="1">
    <location>
        <position position="51"/>
    </location>
</feature>
<feature type="active site" evidence="1">
    <location>
        <position position="123"/>
    </location>
</feature>
<feature type="binding site" evidence="1">
    <location>
        <position position="47"/>
    </location>
    <ligand>
        <name>Mg(2+)</name>
        <dbReference type="ChEBI" id="CHEBI:18420"/>
    </ligand>
</feature>
<feature type="binding site" evidence="1">
    <location>
        <position position="120"/>
    </location>
    <ligand>
        <name>Mg(2+)</name>
        <dbReference type="ChEBI" id="CHEBI:18420"/>
    </ligand>
</feature>
<feature type="binding site" evidence="1">
    <location>
        <position position="123"/>
    </location>
    <ligand>
        <name>Mg(2+)</name>
        <dbReference type="ChEBI" id="CHEBI:18420"/>
    </ligand>
</feature>
<name>RNC_STRPQ</name>
<evidence type="ECO:0000255" key="1">
    <source>
        <dbReference type="HAMAP-Rule" id="MF_00104"/>
    </source>
</evidence>
<protein>
    <recommendedName>
        <fullName evidence="1">Ribonuclease 3</fullName>
        <ecNumber evidence="1">3.1.26.3</ecNumber>
    </recommendedName>
    <alternativeName>
        <fullName evidence="1">Ribonuclease III</fullName>
        <shortName evidence="1">RNase III</shortName>
    </alternativeName>
</protein>
<reference key="1">
    <citation type="journal article" date="2003" name="Genome Res.">
        <title>Genome sequence of an M3 strain of Streptococcus pyogenes reveals a large-scale genomic rearrangement in invasive strains and new insights into phage evolution.</title>
        <authorList>
            <person name="Nakagawa I."/>
            <person name="Kurokawa K."/>
            <person name="Yamashita A."/>
            <person name="Nakata M."/>
            <person name="Tomiyasu Y."/>
            <person name="Okahashi N."/>
            <person name="Kawabata S."/>
            <person name="Yamazaki K."/>
            <person name="Shiba T."/>
            <person name="Yasunaga T."/>
            <person name="Hayashi H."/>
            <person name="Hattori M."/>
            <person name="Hamada S."/>
        </authorList>
    </citation>
    <scope>NUCLEOTIDE SEQUENCE [LARGE SCALE GENOMIC DNA]</scope>
    <source>
        <strain>SSI-1</strain>
    </source>
</reference>
<sequence>MKQLEELLSTSFDIQFNDLTLLETAFTHTSYANEHRLLNVSHNERLEFLGDAVLQLIISEYLFAKYPKKTEGDMSKLRSMIVREESLAGFSRFCSFDAYIKLGKGEEKSGGRRRDTILGDLFEAFLGALLLDKGIDAVRRFLKQVMIPQVEKGNFERVKDYKTCLQEFLQTKGDVAIDYQVISEKGPAHAKQFEVSIVVNGAVLSKGLGKSKKLAEQDAAKNALAQLSEV</sequence>